<gene>
    <name evidence="1" type="primary">rpmF</name>
    <name type="ordered locus">Smal_0868</name>
</gene>
<feature type="chain" id="PRO_1000120176" description="Large ribosomal subunit protein bL32">
    <location>
        <begin position="1"/>
        <end position="64"/>
    </location>
</feature>
<feature type="region of interest" description="Disordered" evidence="2">
    <location>
        <begin position="1"/>
        <end position="35"/>
    </location>
</feature>
<evidence type="ECO:0000255" key="1">
    <source>
        <dbReference type="HAMAP-Rule" id="MF_00340"/>
    </source>
</evidence>
<evidence type="ECO:0000256" key="2">
    <source>
        <dbReference type="SAM" id="MobiDB-lite"/>
    </source>
</evidence>
<evidence type="ECO:0000305" key="3"/>
<proteinExistence type="inferred from homology"/>
<name>RL32_STRM5</name>
<keyword id="KW-0687">Ribonucleoprotein</keyword>
<keyword id="KW-0689">Ribosomal protein</keyword>
<protein>
    <recommendedName>
        <fullName evidence="1">Large ribosomal subunit protein bL32</fullName>
    </recommendedName>
    <alternativeName>
        <fullName evidence="3">50S ribosomal protein L32</fullName>
    </alternativeName>
</protein>
<reference key="1">
    <citation type="submission" date="2008-06" db="EMBL/GenBank/DDBJ databases">
        <title>Complete sequence of Stenotrophomonas maltophilia R551-3.</title>
        <authorList>
            <consortium name="US DOE Joint Genome Institute"/>
            <person name="Lucas S."/>
            <person name="Copeland A."/>
            <person name="Lapidus A."/>
            <person name="Glavina del Rio T."/>
            <person name="Dalin E."/>
            <person name="Tice H."/>
            <person name="Pitluck S."/>
            <person name="Chain P."/>
            <person name="Malfatti S."/>
            <person name="Shin M."/>
            <person name="Vergez L."/>
            <person name="Lang D."/>
            <person name="Schmutz J."/>
            <person name="Larimer F."/>
            <person name="Land M."/>
            <person name="Hauser L."/>
            <person name="Kyrpides N."/>
            <person name="Mikhailova N."/>
            <person name="Taghavi S."/>
            <person name="Monchy S."/>
            <person name="Newman L."/>
            <person name="Vangronsveld J."/>
            <person name="van der Lelie D."/>
            <person name="Richardson P."/>
        </authorList>
    </citation>
    <scope>NUCLEOTIDE SEQUENCE [LARGE SCALE GENOMIC DNA]</scope>
    <source>
        <strain>R551-3</strain>
    </source>
</reference>
<organism>
    <name type="scientific">Stenotrophomonas maltophilia (strain R551-3)</name>
    <dbReference type="NCBI Taxonomy" id="391008"/>
    <lineage>
        <taxon>Bacteria</taxon>
        <taxon>Pseudomonadati</taxon>
        <taxon>Pseudomonadota</taxon>
        <taxon>Gammaproteobacteria</taxon>
        <taxon>Lysobacterales</taxon>
        <taxon>Lysobacteraceae</taxon>
        <taxon>Stenotrophomonas</taxon>
        <taxon>Stenotrophomonas maltophilia group</taxon>
    </lineage>
</organism>
<comment type="similarity">
    <text evidence="1">Belongs to the bacterial ribosomal protein bL32 family.</text>
</comment>
<sequence>MAVQKSRVTPSRRGMRRAHDALSAKQLSTDPTTGEVHLRHHITADGFYRGKKVIQTKTSAVEED</sequence>
<dbReference type="EMBL" id="CP001111">
    <property type="protein sequence ID" value="ACF50573.1"/>
    <property type="molecule type" value="Genomic_DNA"/>
</dbReference>
<dbReference type="RefSeq" id="WP_004154640.1">
    <property type="nucleotide sequence ID" value="NC_011071.1"/>
</dbReference>
<dbReference type="SMR" id="B4SM96"/>
<dbReference type="STRING" id="391008.Smal_0868"/>
<dbReference type="KEGG" id="smt:Smal_0868"/>
<dbReference type="eggNOG" id="COG0333">
    <property type="taxonomic scope" value="Bacteria"/>
</dbReference>
<dbReference type="HOGENOM" id="CLU_129084_2_1_6"/>
<dbReference type="OrthoDB" id="9801927at2"/>
<dbReference type="Proteomes" id="UP000001867">
    <property type="component" value="Chromosome"/>
</dbReference>
<dbReference type="GO" id="GO:0015934">
    <property type="term" value="C:large ribosomal subunit"/>
    <property type="evidence" value="ECO:0007669"/>
    <property type="project" value="InterPro"/>
</dbReference>
<dbReference type="GO" id="GO:0003735">
    <property type="term" value="F:structural constituent of ribosome"/>
    <property type="evidence" value="ECO:0007669"/>
    <property type="project" value="InterPro"/>
</dbReference>
<dbReference type="GO" id="GO:0006412">
    <property type="term" value="P:translation"/>
    <property type="evidence" value="ECO:0007669"/>
    <property type="project" value="UniProtKB-UniRule"/>
</dbReference>
<dbReference type="HAMAP" id="MF_00340">
    <property type="entry name" value="Ribosomal_bL32"/>
    <property type="match status" value="1"/>
</dbReference>
<dbReference type="InterPro" id="IPR002677">
    <property type="entry name" value="Ribosomal_bL32"/>
</dbReference>
<dbReference type="InterPro" id="IPR044957">
    <property type="entry name" value="Ribosomal_bL32_bact"/>
</dbReference>
<dbReference type="InterPro" id="IPR011332">
    <property type="entry name" value="Ribosomal_zn-bd"/>
</dbReference>
<dbReference type="NCBIfam" id="TIGR01031">
    <property type="entry name" value="rpmF_bact"/>
    <property type="match status" value="1"/>
</dbReference>
<dbReference type="PANTHER" id="PTHR35534">
    <property type="entry name" value="50S RIBOSOMAL PROTEIN L32"/>
    <property type="match status" value="1"/>
</dbReference>
<dbReference type="PANTHER" id="PTHR35534:SF1">
    <property type="entry name" value="LARGE RIBOSOMAL SUBUNIT PROTEIN BL32"/>
    <property type="match status" value="1"/>
</dbReference>
<dbReference type="Pfam" id="PF01783">
    <property type="entry name" value="Ribosomal_L32p"/>
    <property type="match status" value="1"/>
</dbReference>
<dbReference type="SUPFAM" id="SSF57829">
    <property type="entry name" value="Zn-binding ribosomal proteins"/>
    <property type="match status" value="1"/>
</dbReference>
<accession>B4SM96</accession>